<proteinExistence type="inferred from homology"/>
<feature type="chain" id="PRO_0000373348" description="Protein MGF 505-9R">
    <location>
        <begin position="1"/>
        <end position="506"/>
    </location>
</feature>
<feature type="repeat" description="ANK 1">
    <location>
        <begin position="54"/>
        <end position="83"/>
    </location>
</feature>
<feature type="repeat" description="ANK 2">
    <location>
        <begin position="253"/>
        <end position="283"/>
    </location>
</feature>
<feature type="repeat" description="ANK 3">
    <location>
        <begin position="313"/>
        <end position="343"/>
    </location>
</feature>
<dbReference type="EMBL" id="AY261366">
    <property type="status" value="NOT_ANNOTATED_CDS"/>
    <property type="molecule type" value="Genomic_DNA"/>
</dbReference>
<dbReference type="SMR" id="P0C9U9"/>
<dbReference type="Proteomes" id="UP000000858">
    <property type="component" value="Segment"/>
</dbReference>
<dbReference type="InterPro" id="IPR036770">
    <property type="entry name" value="Ankyrin_rpt-contain_sf"/>
</dbReference>
<dbReference type="InterPro" id="IPR004858">
    <property type="entry name" value="MGF_505"/>
</dbReference>
<dbReference type="Pfam" id="PF03158">
    <property type="entry name" value="DUF249"/>
    <property type="match status" value="1"/>
</dbReference>
<dbReference type="SUPFAM" id="SSF48403">
    <property type="entry name" value="Ankyrin repeat"/>
    <property type="match status" value="1"/>
</dbReference>
<reference key="1">
    <citation type="submission" date="2003-03" db="EMBL/GenBank/DDBJ databases">
        <title>African swine fever virus genomes.</title>
        <authorList>
            <person name="Kutish G.F."/>
            <person name="Rock D.L."/>
        </authorList>
    </citation>
    <scope>NUCLEOTIDE SEQUENCE [LARGE SCALE GENOMIC DNA]</scope>
</reference>
<accession>P0C9U9</accession>
<organismHost>
    <name type="scientific">Ornithodoros</name>
    <name type="common">relapsing fever ticks</name>
    <dbReference type="NCBI Taxonomy" id="6937"/>
</organismHost>
<organismHost>
    <name type="scientific">Phacochoerus aethiopicus</name>
    <name type="common">Warthog</name>
    <dbReference type="NCBI Taxonomy" id="85517"/>
</organismHost>
<organismHost>
    <name type="scientific">Phacochoerus africanus</name>
    <name type="common">Warthog</name>
    <dbReference type="NCBI Taxonomy" id="41426"/>
</organismHost>
<organismHost>
    <name type="scientific">Potamochoerus larvatus</name>
    <name type="common">Bushpig</name>
    <dbReference type="NCBI Taxonomy" id="273792"/>
</organismHost>
<organismHost>
    <name type="scientific">Sus scrofa</name>
    <name type="common">Pig</name>
    <dbReference type="NCBI Taxonomy" id="9823"/>
</organismHost>
<name>5059R_ASFWA</name>
<organism>
    <name type="scientific">African swine fever virus (isolate Warthog/Namibia/Wart80/1980)</name>
    <name type="common">ASFV</name>
    <dbReference type="NCBI Taxonomy" id="561444"/>
    <lineage>
        <taxon>Viruses</taxon>
        <taxon>Varidnaviria</taxon>
        <taxon>Bamfordvirae</taxon>
        <taxon>Nucleocytoviricota</taxon>
        <taxon>Pokkesviricetes</taxon>
        <taxon>Asfuvirales</taxon>
        <taxon>Asfarviridae</taxon>
        <taxon>Asfivirus</taxon>
        <taxon>African swine fever virus</taxon>
    </lineage>
</organism>
<evidence type="ECO:0000250" key="1">
    <source>
        <dbReference type="UniProtKB" id="Q89740"/>
    </source>
</evidence>
<evidence type="ECO:0000305" key="2"/>
<sequence length="506" mass="59236">MFSLQDLCRKNLFLPLEPLGKHVVQRLGLYWEGHGSVKRVGDCFVCVDQIWVLPTHKAVQIAASEGNEDIVKLFLLWKGSLQYAIIGALEGRQYDLIQKYYNQIGDCHQILPLIQDPEIYERCHELNVTCTFQCLFQHAIRDNMLPIFQKYGEDLNGNRGMVQLLYEMACRLQNYDIIKWIGFNLHVYNLEAIFSIAFVRKDLTLYSLGYMLLLGRMSTVDRNFISIITRHLEYASKKGLFDFVLESLKYGGQVDTVLFQAVKYNHRKILAHFIHEIPRETVEKLILHAVESRASRKTFNLLLSSINYCVNPFVKKLLHAVVKHKYMLIIKLLLERPKKKINLVDAALFKLVKYSTYKEIVKYMDEFSVDPKRVVKMAARLMRVDLIKKISNDAWEDKLERIKHLKQMVNTMNHRNGKNLLMYNIHNITGYTHLNTKEAFNLTKFYAVHNATCLFKEMCKSCFEHDKIQFRELLEDCLHIANRHAYIQIAETADECIKYIDLITPK</sequence>
<gene>
    <name type="ordered locus">War-042</name>
</gene>
<protein>
    <recommendedName>
        <fullName>Protein MGF 505-9R</fullName>
    </recommendedName>
</protein>
<keyword id="KW-0040">ANK repeat</keyword>
<keyword id="KW-0244">Early protein</keyword>
<keyword id="KW-0677">Repeat</keyword>
<comment type="function">
    <text evidence="1">Plays a role in virus cell tropism, and may be required for efficient virus replication in macrophages.</text>
</comment>
<comment type="induction">
    <text evidence="2">Expressed in the early phase of the viral replicative cycle.</text>
</comment>
<comment type="similarity">
    <text evidence="2">Belongs to the asfivirus MGF 505 family.</text>
</comment>